<proteinExistence type="inferred from homology"/>
<reference key="1">
    <citation type="journal article" date="2009" name="PLoS ONE">
        <title>Genome degradation in Brucella ovis corresponds with narrowing of its host range and tissue tropism.</title>
        <authorList>
            <person name="Tsolis R.M."/>
            <person name="Seshadri R."/>
            <person name="Santos R.L."/>
            <person name="Sangari F.J."/>
            <person name="Lobo J.M."/>
            <person name="de Jong M.F."/>
            <person name="Ren Q."/>
            <person name="Myers G."/>
            <person name="Brinkac L.M."/>
            <person name="Nelson W.C."/>
            <person name="Deboy R.T."/>
            <person name="Angiuoli S."/>
            <person name="Khouri H."/>
            <person name="Dimitrov G."/>
            <person name="Robinson J.R."/>
            <person name="Mulligan S."/>
            <person name="Walker R.L."/>
            <person name="Elzer P.E."/>
            <person name="Hassan K.A."/>
            <person name="Paulsen I.T."/>
        </authorList>
    </citation>
    <scope>NUCLEOTIDE SEQUENCE [LARGE SCALE GENOMIC DNA]</scope>
    <source>
        <strain>ATCC 25840 / 63/290 / NCTC 10512</strain>
    </source>
</reference>
<gene>
    <name evidence="1" type="primary">lspA</name>
    <name type="ordered locus">BOV_0144</name>
</gene>
<comment type="function">
    <text evidence="1">This protein specifically catalyzes the removal of signal peptides from prolipoproteins.</text>
</comment>
<comment type="catalytic activity">
    <reaction evidence="1">
        <text>Release of signal peptides from bacterial membrane prolipoproteins. Hydrolyzes -Xaa-Yaa-Zaa-|-(S,diacylglyceryl)Cys-, in which Xaa is hydrophobic (preferably Leu), and Yaa (Ala or Ser) and Zaa (Gly or Ala) have small, neutral side chains.</text>
        <dbReference type="EC" id="3.4.23.36"/>
    </reaction>
</comment>
<comment type="pathway">
    <text evidence="1">Protein modification; lipoprotein biosynthesis (signal peptide cleavage).</text>
</comment>
<comment type="subcellular location">
    <subcellularLocation>
        <location evidence="1">Cell inner membrane</location>
        <topology evidence="1">Multi-pass membrane protein</topology>
    </subcellularLocation>
</comment>
<comment type="similarity">
    <text evidence="1">Belongs to the peptidase A8 family.</text>
</comment>
<dbReference type="EC" id="3.4.23.36" evidence="1"/>
<dbReference type="EMBL" id="CP000708">
    <property type="protein sequence ID" value="ABQ60944.1"/>
    <property type="molecule type" value="Genomic_DNA"/>
</dbReference>
<dbReference type="RefSeq" id="WP_002965397.1">
    <property type="nucleotide sequence ID" value="NC_009505.1"/>
</dbReference>
<dbReference type="SMR" id="A5VN85"/>
<dbReference type="GeneID" id="97534439"/>
<dbReference type="KEGG" id="bov:BOV_0144"/>
<dbReference type="HOGENOM" id="CLU_083252_4_3_5"/>
<dbReference type="PhylomeDB" id="A5VN85"/>
<dbReference type="UniPathway" id="UPA00665"/>
<dbReference type="Proteomes" id="UP000006383">
    <property type="component" value="Chromosome I"/>
</dbReference>
<dbReference type="GO" id="GO:0005886">
    <property type="term" value="C:plasma membrane"/>
    <property type="evidence" value="ECO:0007669"/>
    <property type="project" value="UniProtKB-SubCell"/>
</dbReference>
<dbReference type="GO" id="GO:0004190">
    <property type="term" value="F:aspartic-type endopeptidase activity"/>
    <property type="evidence" value="ECO:0007669"/>
    <property type="project" value="UniProtKB-UniRule"/>
</dbReference>
<dbReference type="GO" id="GO:0006508">
    <property type="term" value="P:proteolysis"/>
    <property type="evidence" value="ECO:0007669"/>
    <property type="project" value="UniProtKB-KW"/>
</dbReference>
<dbReference type="HAMAP" id="MF_00161">
    <property type="entry name" value="LspA"/>
    <property type="match status" value="1"/>
</dbReference>
<dbReference type="InterPro" id="IPR001872">
    <property type="entry name" value="Peptidase_A8"/>
</dbReference>
<dbReference type="NCBIfam" id="TIGR00077">
    <property type="entry name" value="lspA"/>
    <property type="match status" value="1"/>
</dbReference>
<dbReference type="PANTHER" id="PTHR33695">
    <property type="entry name" value="LIPOPROTEIN SIGNAL PEPTIDASE"/>
    <property type="match status" value="1"/>
</dbReference>
<dbReference type="PANTHER" id="PTHR33695:SF1">
    <property type="entry name" value="LIPOPROTEIN SIGNAL PEPTIDASE"/>
    <property type="match status" value="1"/>
</dbReference>
<dbReference type="Pfam" id="PF01252">
    <property type="entry name" value="Peptidase_A8"/>
    <property type="match status" value="1"/>
</dbReference>
<dbReference type="PRINTS" id="PR00781">
    <property type="entry name" value="LIPOSIGPTASE"/>
</dbReference>
<dbReference type="PROSITE" id="PS00855">
    <property type="entry name" value="SPASE_II"/>
    <property type="match status" value="1"/>
</dbReference>
<evidence type="ECO:0000255" key="1">
    <source>
        <dbReference type="HAMAP-Rule" id="MF_00161"/>
    </source>
</evidence>
<protein>
    <recommendedName>
        <fullName evidence="1">Lipoprotein signal peptidase</fullName>
        <ecNumber evidence="1">3.4.23.36</ecNumber>
    </recommendedName>
    <alternativeName>
        <fullName evidence="1">Prolipoprotein signal peptidase</fullName>
    </alternativeName>
    <alternativeName>
        <fullName evidence="1">Signal peptidase II</fullName>
        <shortName evidence="1">SPase II</shortName>
    </alternativeName>
</protein>
<name>LSPA_BRUO2</name>
<accession>A5VN85</accession>
<keyword id="KW-0064">Aspartyl protease</keyword>
<keyword id="KW-0997">Cell inner membrane</keyword>
<keyword id="KW-1003">Cell membrane</keyword>
<keyword id="KW-0378">Hydrolase</keyword>
<keyword id="KW-0472">Membrane</keyword>
<keyword id="KW-0645">Protease</keyword>
<keyword id="KW-0812">Transmembrane</keyword>
<keyword id="KW-1133">Transmembrane helix</keyword>
<organism>
    <name type="scientific">Brucella ovis (strain ATCC 25840 / 63/290 / NCTC 10512)</name>
    <dbReference type="NCBI Taxonomy" id="444178"/>
    <lineage>
        <taxon>Bacteria</taxon>
        <taxon>Pseudomonadati</taxon>
        <taxon>Pseudomonadota</taxon>
        <taxon>Alphaproteobacteria</taxon>
        <taxon>Hyphomicrobiales</taxon>
        <taxon>Brucellaceae</taxon>
        <taxon>Brucella/Ochrobactrum group</taxon>
        <taxon>Brucella</taxon>
    </lineage>
</organism>
<feature type="chain" id="PRO_1000038781" description="Lipoprotein signal peptidase">
    <location>
        <begin position="1"/>
        <end position="160"/>
    </location>
</feature>
<feature type="transmembrane region" description="Helical" evidence="1">
    <location>
        <begin position="6"/>
        <end position="26"/>
    </location>
</feature>
<feature type="transmembrane region" description="Helical" evidence="1">
    <location>
        <begin position="58"/>
        <end position="78"/>
    </location>
</feature>
<feature type="transmembrane region" description="Helical" evidence="1">
    <location>
        <begin position="95"/>
        <end position="115"/>
    </location>
</feature>
<feature type="transmembrane region" description="Helical" evidence="1">
    <location>
        <begin position="127"/>
        <end position="147"/>
    </location>
</feature>
<feature type="active site" evidence="1">
    <location>
        <position position="117"/>
    </location>
</feature>
<feature type="active site" evidence="1">
    <location>
        <position position="135"/>
    </location>
</feature>
<sequence length="160" mass="18230">MKRHAVWSSLFVVILAVLIDQGIKYLVESRMFYGQQIDLLPFLALFRTHNEGIAFSMLAWLHDGGLIAITLAVIAFVLYLWWTNAPERVFARYGFALVIGGAIGNLIDRVMHGYVVDYVLFHLPTWSFAVFNLADAFITIGAGLIILEEFLGWRRERISH</sequence>